<name>SYA_LEUMM</name>
<gene>
    <name type="primary">alaS</name>
    <name type="ordered locus">LEUM_0556</name>
</gene>
<comment type="function">
    <text evidence="1">Catalyzes the attachment of alanine to tRNA(Ala) in a two-step reaction: alanine is first activated by ATP to form Ala-AMP and then transferred to the acceptor end of tRNA(Ala). Also edits incorrectly charged Ser-tRNA(Ala) and Gly-tRNA(Ala) via its editing domain (By similarity).</text>
</comment>
<comment type="catalytic activity">
    <reaction>
        <text>tRNA(Ala) + L-alanine + ATP = L-alanyl-tRNA(Ala) + AMP + diphosphate</text>
        <dbReference type="Rhea" id="RHEA:12540"/>
        <dbReference type="Rhea" id="RHEA-COMP:9657"/>
        <dbReference type="Rhea" id="RHEA-COMP:9923"/>
        <dbReference type="ChEBI" id="CHEBI:30616"/>
        <dbReference type="ChEBI" id="CHEBI:33019"/>
        <dbReference type="ChEBI" id="CHEBI:57972"/>
        <dbReference type="ChEBI" id="CHEBI:78442"/>
        <dbReference type="ChEBI" id="CHEBI:78497"/>
        <dbReference type="ChEBI" id="CHEBI:456215"/>
        <dbReference type="EC" id="6.1.1.7"/>
    </reaction>
</comment>
<comment type="subcellular location">
    <subcellularLocation>
        <location evidence="1">Cytoplasm</location>
    </subcellularLocation>
</comment>
<comment type="domain">
    <text evidence="1">Consists of three domains; the N-terminal catalytic domain, the editing domain and the C-terminal C-Ala domain. The editing domain removes incorrectly charged amino acids, while the C-Ala domain, along with tRNA(Ala), serves as a bridge to cooperatively bring together the editing and aminoacylation centers thus stimulating deacylation of misacylated tRNAs (By similarity).</text>
</comment>
<comment type="similarity">
    <text evidence="2">Belongs to the class-II aminoacyl-tRNA synthetase family.</text>
</comment>
<keyword id="KW-0030">Aminoacyl-tRNA synthetase</keyword>
<keyword id="KW-0067">ATP-binding</keyword>
<keyword id="KW-0963">Cytoplasm</keyword>
<keyword id="KW-0436">Ligase</keyword>
<keyword id="KW-0547">Nucleotide-binding</keyword>
<keyword id="KW-0648">Protein biosynthesis</keyword>
<keyword id="KW-1185">Reference proteome</keyword>
<keyword id="KW-0694">RNA-binding</keyword>
<keyword id="KW-0820">tRNA-binding</keyword>
<proteinExistence type="inferred from homology"/>
<dbReference type="EC" id="6.1.1.7"/>
<dbReference type="EMBL" id="CP000414">
    <property type="protein sequence ID" value="ABJ61670.1"/>
    <property type="molecule type" value="Genomic_DNA"/>
</dbReference>
<dbReference type="RefSeq" id="WP_011679382.1">
    <property type="nucleotide sequence ID" value="NC_008531.1"/>
</dbReference>
<dbReference type="SMR" id="Q03YQ2"/>
<dbReference type="EnsemblBacteria" id="ABJ61670">
    <property type="protein sequence ID" value="ABJ61670"/>
    <property type="gene ID" value="LEUM_0556"/>
</dbReference>
<dbReference type="GeneID" id="29577340"/>
<dbReference type="KEGG" id="lme:LEUM_0556"/>
<dbReference type="eggNOG" id="COG0013">
    <property type="taxonomic scope" value="Bacteria"/>
</dbReference>
<dbReference type="HOGENOM" id="CLU_004485_1_1_9"/>
<dbReference type="Proteomes" id="UP000000362">
    <property type="component" value="Chromosome"/>
</dbReference>
<dbReference type="GO" id="GO:0005829">
    <property type="term" value="C:cytosol"/>
    <property type="evidence" value="ECO:0007669"/>
    <property type="project" value="TreeGrafter"/>
</dbReference>
<dbReference type="GO" id="GO:0004813">
    <property type="term" value="F:alanine-tRNA ligase activity"/>
    <property type="evidence" value="ECO:0007669"/>
    <property type="project" value="UniProtKB-UniRule"/>
</dbReference>
<dbReference type="GO" id="GO:0002161">
    <property type="term" value="F:aminoacyl-tRNA deacylase activity"/>
    <property type="evidence" value="ECO:0007669"/>
    <property type="project" value="TreeGrafter"/>
</dbReference>
<dbReference type="GO" id="GO:0005524">
    <property type="term" value="F:ATP binding"/>
    <property type="evidence" value="ECO:0007669"/>
    <property type="project" value="UniProtKB-UniRule"/>
</dbReference>
<dbReference type="GO" id="GO:0140096">
    <property type="term" value="F:catalytic activity, acting on a protein"/>
    <property type="evidence" value="ECO:0007669"/>
    <property type="project" value="UniProtKB-ARBA"/>
</dbReference>
<dbReference type="GO" id="GO:0016740">
    <property type="term" value="F:transferase activity"/>
    <property type="evidence" value="ECO:0007669"/>
    <property type="project" value="UniProtKB-ARBA"/>
</dbReference>
<dbReference type="GO" id="GO:0000049">
    <property type="term" value="F:tRNA binding"/>
    <property type="evidence" value="ECO:0007669"/>
    <property type="project" value="UniProtKB-KW"/>
</dbReference>
<dbReference type="GO" id="GO:0006419">
    <property type="term" value="P:alanyl-tRNA aminoacylation"/>
    <property type="evidence" value="ECO:0007669"/>
    <property type="project" value="UniProtKB-UniRule"/>
</dbReference>
<dbReference type="CDD" id="cd00673">
    <property type="entry name" value="AlaRS_core"/>
    <property type="match status" value="1"/>
</dbReference>
<dbReference type="FunFam" id="3.10.310.40:FF:000001">
    <property type="entry name" value="Alanine--tRNA ligase"/>
    <property type="match status" value="1"/>
</dbReference>
<dbReference type="FunFam" id="3.30.930.10:FF:000046">
    <property type="entry name" value="Alanine--tRNA ligase"/>
    <property type="match status" value="1"/>
</dbReference>
<dbReference type="FunFam" id="3.30.980.10:FF:000004">
    <property type="entry name" value="Alanine--tRNA ligase, cytoplasmic"/>
    <property type="match status" value="1"/>
</dbReference>
<dbReference type="Gene3D" id="2.40.30.130">
    <property type="match status" value="1"/>
</dbReference>
<dbReference type="Gene3D" id="3.10.310.40">
    <property type="match status" value="1"/>
</dbReference>
<dbReference type="Gene3D" id="3.30.54.20">
    <property type="match status" value="1"/>
</dbReference>
<dbReference type="Gene3D" id="6.10.250.550">
    <property type="match status" value="1"/>
</dbReference>
<dbReference type="Gene3D" id="3.30.930.10">
    <property type="entry name" value="Bira Bifunctional Protein, Domain 2"/>
    <property type="match status" value="1"/>
</dbReference>
<dbReference type="Gene3D" id="3.30.980.10">
    <property type="entry name" value="Threonyl-trna Synthetase, Chain A, domain 2"/>
    <property type="match status" value="1"/>
</dbReference>
<dbReference type="HAMAP" id="MF_00036_B">
    <property type="entry name" value="Ala_tRNA_synth_B"/>
    <property type="match status" value="1"/>
</dbReference>
<dbReference type="InterPro" id="IPR045864">
    <property type="entry name" value="aa-tRNA-synth_II/BPL/LPL"/>
</dbReference>
<dbReference type="InterPro" id="IPR002318">
    <property type="entry name" value="Ala-tRNA-lgiase_IIc"/>
</dbReference>
<dbReference type="InterPro" id="IPR018162">
    <property type="entry name" value="Ala-tRNA-ligase_IIc_anticod-bd"/>
</dbReference>
<dbReference type="InterPro" id="IPR018165">
    <property type="entry name" value="Ala-tRNA-synth_IIc_core"/>
</dbReference>
<dbReference type="InterPro" id="IPR018164">
    <property type="entry name" value="Ala-tRNA-synth_IIc_N"/>
</dbReference>
<dbReference type="InterPro" id="IPR050058">
    <property type="entry name" value="Ala-tRNA_ligase"/>
</dbReference>
<dbReference type="InterPro" id="IPR023033">
    <property type="entry name" value="Ala_tRNA_ligase_euk/bac"/>
</dbReference>
<dbReference type="InterPro" id="IPR003156">
    <property type="entry name" value="DHHA1_dom"/>
</dbReference>
<dbReference type="InterPro" id="IPR018163">
    <property type="entry name" value="Thr/Ala-tRNA-synth_IIc_edit"/>
</dbReference>
<dbReference type="InterPro" id="IPR009000">
    <property type="entry name" value="Transl_B-barrel_sf"/>
</dbReference>
<dbReference type="InterPro" id="IPR012947">
    <property type="entry name" value="tRNA_SAD"/>
</dbReference>
<dbReference type="NCBIfam" id="TIGR00344">
    <property type="entry name" value="alaS"/>
    <property type="match status" value="1"/>
</dbReference>
<dbReference type="PANTHER" id="PTHR11777:SF9">
    <property type="entry name" value="ALANINE--TRNA LIGASE, CYTOPLASMIC"/>
    <property type="match status" value="1"/>
</dbReference>
<dbReference type="PANTHER" id="PTHR11777">
    <property type="entry name" value="ALANYL-TRNA SYNTHETASE"/>
    <property type="match status" value="1"/>
</dbReference>
<dbReference type="Pfam" id="PF02272">
    <property type="entry name" value="DHHA1"/>
    <property type="match status" value="1"/>
</dbReference>
<dbReference type="Pfam" id="PF01411">
    <property type="entry name" value="tRNA-synt_2c"/>
    <property type="match status" value="1"/>
</dbReference>
<dbReference type="Pfam" id="PF07973">
    <property type="entry name" value="tRNA_SAD"/>
    <property type="match status" value="1"/>
</dbReference>
<dbReference type="PRINTS" id="PR00980">
    <property type="entry name" value="TRNASYNTHALA"/>
</dbReference>
<dbReference type="SMART" id="SM00863">
    <property type="entry name" value="tRNA_SAD"/>
    <property type="match status" value="1"/>
</dbReference>
<dbReference type="SUPFAM" id="SSF55681">
    <property type="entry name" value="Class II aaRS and biotin synthetases"/>
    <property type="match status" value="1"/>
</dbReference>
<dbReference type="SUPFAM" id="SSF101353">
    <property type="entry name" value="Putative anticodon-binding domain of alanyl-tRNA synthetase (AlaRS)"/>
    <property type="match status" value="1"/>
</dbReference>
<dbReference type="SUPFAM" id="SSF55186">
    <property type="entry name" value="ThrRS/AlaRS common domain"/>
    <property type="match status" value="1"/>
</dbReference>
<dbReference type="SUPFAM" id="SSF50447">
    <property type="entry name" value="Translation proteins"/>
    <property type="match status" value="1"/>
</dbReference>
<dbReference type="PROSITE" id="PS50860">
    <property type="entry name" value="AA_TRNA_LIGASE_II_ALA"/>
    <property type="match status" value="1"/>
</dbReference>
<sequence>MKDLSSAEIRQMFLDFFASKGHEVVPSKNLIPQDDPTLLWINSGVATLKKYFDGTVVPNNPRITNSQKAIRTNDIENVGKTARHHTLFEMMGNFSIGDYFKEQAIPWAWELLTSPEWYGLDAEKLYVTVYPKDQEARKIWEEKTSLPDGHIYEVEDNFWDIGEGPSGPDSEIFFDRGSSFQDLPDDDPEMYPGGENERYLEIWNLVFSQFNHLPGLTDNSQYPELPHKNIDTGMGLERVVSVFQNGRTNFDTDLFLPIIRATEKLSNQFTYDDSQDSEVNTSFKVIADHIRAITFAIGDGALPSNEGRGYVIRRLLRRAVLHGQKLGIKGQFLTNLVPIVGDIMESYYPEVKANTAKIQKTVAAEEKRFNATLTGGLSLLNDVIKEAKKTGQTQISGADAFKLSDTYGFPLELTQEQAEDAGLTVDVDRYNDELQAQRVRARAARSNTKSMGVQNAVLTDLRVDSKYVGWSQTEVNHAEIVAIIGEDEQGVDALLDNADVDATVQVAFDVTPFYAEMGGQVPDFGDVLNTNGDVIAHVTDVQTAPNGQHIHTVDVISSFTLGDKVDLKVDMARHIAVSKNHTATHMLDQSLRNVLGGDVHQAGSLVEPEYLRFDFNNEGPVSSEDLDKIESMMNQEIAKNLPVTWLETDIESAKKLGAVAVFGEKYGDQVRVVSIGDFNKEFDGGTHANSTAELGLFKIVSESGIGAGVRRIEAVTGLQALSQYKAQEKALKEIATALKAQKLTDAPEKVYDLQADLRTVQRHAESLEAKLANATAGEIFNDVKTVNGHTYITAQLQVSGMDGLRQVADNWKENYPSDVLVLATVADEKVSLIVAAAPDANQSGIKAGELIKSIAPHIGGGGGGRPDMAQAGGKKPAGIPDAFAAVSAFLADK</sequence>
<protein>
    <recommendedName>
        <fullName>Alanine--tRNA ligase</fullName>
        <ecNumber>6.1.1.7</ecNumber>
    </recommendedName>
    <alternativeName>
        <fullName>Alanyl-tRNA synthetase</fullName>
        <shortName>AlaRS</shortName>
    </alternativeName>
</protein>
<organism>
    <name type="scientific">Leuconostoc mesenteroides subsp. mesenteroides (strain ATCC 8293 / DSM 20343 / BCRC 11652 / CCM 1803 / JCM 6124 / NCDO 523 / NBRC 100496 / NCIMB 8023 / NCTC 12954 / NRRL B-1118 / 37Y)</name>
    <dbReference type="NCBI Taxonomy" id="203120"/>
    <lineage>
        <taxon>Bacteria</taxon>
        <taxon>Bacillati</taxon>
        <taxon>Bacillota</taxon>
        <taxon>Bacilli</taxon>
        <taxon>Lactobacillales</taxon>
        <taxon>Lactobacillaceae</taxon>
        <taxon>Leuconostoc</taxon>
    </lineage>
</organism>
<evidence type="ECO:0000250" key="1"/>
<evidence type="ECO:0000305" key="2"/>
<feature type="chain" id="PRO_0000347661" description="Alanine--tRNA ligase">
    <location>
        <begin position="1"/>
        <end position="893"/>
    </location>
</feature>
<reference key="1">
    <citation type="journal article" date="2006" name="Proc. Natl. Acad. Sci. U.S.A.">
        <title>Comparative genomics of the lactic acid bacteria.</title>
        <authorList>
            <person name="Makarova K.S."/>
            <person name="Slesarev A."/>
            <person name="Wolf Y.I."/>
            <person name="Sorokin A."/>
            <person name="Mirkin B."/>
            <person name="Koonin E.V."/>
            <person name="Pavlov A."/>
            <person name="Pavlova N."/>
            <person name="Karamychev V."/>
            <person name="Polouchine N."/>
            <person name="Shakhova V."/>
            <person name="Grigoriev I."/>
            <person name="Lou Y."/>
            <person name="Rohksar D."/>
            <person name="Lucas S."/>
            <person name="Huang K."/>
            <person name="Goodstein D.M."/>
            <person name="Hawkins T."/>
            <person name="Plengvidhya V."/>
            <person name="Welker D."/>
            <person name="Hughes J."/>
            <person name="Goh Y."/>
            <person name="Benson A."/>
            <person name="Baldwin K."/>
            <person name="Lee J.-H."/>
            <person name="Diaz-Muniz I."/>
            <person name="Dosti B."/>
            <person name="Smeianov V."/>
            <person name="Wechter W."/>
            <person name="Barabote R."/>
            <person name="Lorca G."/>
            <person name="Altermann E."/>
            <person name="Barrangou R."/>
            <person name="Ganesan B."/>
            <person name="Xie Y."/>
            <person name="Rawsthorne H."/>
            <person name="Tamir D."/>
            <person name="Parker C."/>
            <person name="Breidt F."/>
            <person name="Broadbent J.R."/>
            <person name="Hutkins R."/>
            <person name="O'Sullivan D."/>
            <person name="Steele J."/>
            <person name="Unlu G."/>
            <person name="Saier M.H. Jr."/>
            <person name="Klaenhammer T."/>
            <person name="Richardson P."/>
            <person name="Kozyavkin S."/>
            <person name="Weimer B.C."/>
            <person name="Mills D.A."/>
        </authorList>
    </citation>
    <scope>NUCLEOTIDE SEQUENCE [LARGE SCALE GENOMIC DNA]</scope>
    <source>
        <strain>ATCC 8293 / DSM 20343 / BCRC 11652 / CCM 1803 / JCM 6124 / NCDO 523 / NBRC 100496 / NCIMB 8023 / NCTC 12954 / NRRL B-1118 / 37Y</strain>
    </source>
</reference>
<accession>Q03YQ2</accession>